<protein>
    <recommendedName>
        <fullName>Alpha-amylase</fullName>
        <ecNumber evidence="2">3.2.1.1</ecNumber>
    </recommendedName>
    <alternativeName>
        <fullName>1,4-alpha-D-glucan glucanohydrolase</fullName>
    </alternativeName>
</protein>
<dbReference type="EC" id="3.2.1.1" evidence="2"/>
<dbReference type="EMBL" id="X06905">
    <property type="protein sequence ID" value="CAA30009.1"/>
    <property type="molecule type" value="Genomic_DNA"/>
</dbReference>
<dbReference type="PIR" id="A29347">
    <property type="entry name" value="A29347"/>
</dbReference>
<dbReference type="SMR" id="P09107"/>
<dbReference type="CAZy" id="GH13">
    <property type="family name" value="Glycoside Hydrolase Family 13"/>
</dbReference>
<dbReference type="eggNOG" id="KOG2212">
    <property type="taxonomic scope" value="Eukaryota"/>
</dbReference>
<dbReference type="HOGENOM" id="CLU_013336_2_1_1"/>
<dbReference type="BRENDA" id="3.2.1.1">
    <property type="organism ID" value="6437"/>
</dbReference>
<dbReference type="GO" id="GO:0004556">
    <property type="term" value="F:alpha-amylase activity"/>
    <property type="evidence" value="ECO:0007669"/>
    <property type="project" value="UniProtKB-EC"/>
</dbReference>
<dbReference type="GO" id="GO:0046872">
    <property type="term" value="F:metal ion binding"/>
    <property type="evidence" value="ECO:0007669"/>
    <property type="project" value="UniProtKB-KW"/>
</dbReference>
<dbReference type="GO" id="GO:0005975">
    <property type="term" value="P:carbohydrate metabolic process"/>
    <property type="evidence" value="ECO:0007669"/>
    <property type="project" value="InterPro"/>
</dbReference>
<dbReference type="CDD" id="cd11317">
    <property type="entry name" value="AmyAc_bac_euk_AmyA"/>
    <property type="match status" value="1"/>
</dbReference>
<dbReference type="Gene3D" id="3.20.20.80">
    <property type="entry name" value="Glycosidases"/>
    <property type="match status" value="1"/>
</dbReference>
<dbReference type="Gene3D" id="2.60.40.1180">
    <property type="entry name" value="Golgi alpha-mannosidase II"/>
    <property type="match status" value="1"/>
</dbReference>
<dbReference type="InterPro" id="IPR006048">
    <property type="entry name" value="A-amylase/branching_C"/>
</dbReference>
<dbReference type="InterPro" id="IPR031319">
    <property type="entry name" value="A-amylase_C"/>
</dbReference>
<dbReference type="InterPro" id="IPR006046">
    <property type="entry name" value="Alpha_amylase"/>
</dbReference>
<dbReference type="InterPro" id="IPR006047">
    <property type="entry name" value="Glyco_hydro_13_cat_dom"/>
</dbReference>
<dbReference type="InterPro" id="IPR013780">
    <property type="entry name" value="Glyco_hydro_b"/>
</dbReference>
<dbReference type="InterPro" id="IPR017853">
    <property type="entry name" value="Glycoside_hydrolase_SF"/>
</dbReference>
<dbReference type="PANTHER" id="PTHR43447">
    <property type="entry name" value="ALPHA-AMYLASE"/>
    <property type="match status" value="1"/>
</dbReference>
<dbReference type="Pfam" id="PF00128">
    <property type="entry name" value="Alpha-amylase"/>
    <property type="match status" value="1"/>
</dbReference>
<dbReference type="Pfam" id="PF02806">
    <property type="entry name" value="Alpha-amylase_C"/>
    <property type="match status" value="1"/>
</dbReference>
<dbReference type="PRINTS" id="PR00110">
    <property type="entry name" value="ALPHAAMYLASE"/>
</dbReference>
<dbReference type="SMART" id="SM00642">
    <property type="entry name" value="Aamy"/>
    <property type="match status" value="1"/>
</dbReference>
<dbReference type="SMART" id="SM00632">
    <property type="entry name" value="Aamy_C"/>
    <property type="match status" value="1"/>
</dbReference>
<dbReference type="SUPFAM" id="SSF51445">
    <property type="entry name" value="(Trans)glycosidases"/>
    <property type="match status" value="1"/>
</dbReference>
<dbReference type="SUPFAM" id="SSF51011">
    <property type="entry name" value="Glycosyl hydrolase domain"/>
    <property type="match status" value="1"/>
</dbReference>
<proteinExistence type="inferred from homology"/>
<feature type="signal peptide" evidence="3">
    <location>
        <begin position="1" status="less than"/>
        <end position="16"/>
    </location>
</feature>
<feature type="chain" id="PRO_0000001395" description="Alpha-amylase">
    <location>
        <begin position="17"/>
        <end position="489"/>
    </location>
</feature>
<feature type="active site" description="Nucleophile" evidence="2">
    <location>
        <position position="203"/>
    </location>
</feature>
<feature type="active site" description="Proton donor" evidence="2">
    <location>
        <position position="240"/>
    </location>
</feature>
<feature type="binding site" evidence="2">
    <location>
        <position position="116"/>
    </location>
    <ligand>
        <name>Ca(2+)</name>
        <dbReference type="ChEBI" id="CHEBI:29108"/>
    </ligand>
</feature>
<feature type="binding site" evidence="2">
    <location>
        <position position="164"/>
    </location>
    <ligand>
        <name>Ca(2+)</name>
        <dbReference type="ChEBI" id="CHEBI:29108"/>
    </ligand>
</feature>
<feature type="binding site" evidence="2">
    <location>
        <position position="173"/>
    </location>
    <ligand>
        <name>Ca(2+)</name>
        <dbReference type="ChEBI" id="CHEBI:29108"/>
    </ligand>
</feature>
<feature type="binding site" evidence="2">
    <location>
        <position position="201"/>
    </location>
    <ligand>
        <name>chloride</name>
        <dbReference type="ChEBI" id="CHEBI:17996"/>
    </ligand>
</feature>
<feature type="binding site" evidence="2">
    <location>
        <position position="207"/>
    </location>
    <ligand>
        <name>Ca(2+)</name>
        <dbReference type="ChEBI" id="CHEBI:29108"/>
    </ligand>
</feature>
<feature type="binding site" evidence="2">
    <location>
        <position position="303"/>
    </location>
    <ligand>
        <name>chloride</name>
        <dbReference type="ChEBI" id="CHEBI:17996"/>
    </ligand>
</feature>
<feature type="binding site" evidence="2">
    <location>
        <position position="339"/>
    </location>
    <ligand>
        <name>chloride</name>
        <dbReference type="ChEBI" id="CHEBI:17996"/>
    </ligand>
</feature>
<feature type="site" description="Transition state stabilizer" evidence="2">
    <location>
        <position position="305"/>
    </location>
</feature>
<feature type="disulfide bond" evidence="2">
    <location>
        <begin position="44"/>
        <end position="102"/>
    </location>
</feature>
<feature type="disulfide bond" evidence="2">
    <location>
        <begin position="152"/>
        <end position="166"/>
    </location>
</feature>
<feature type="disulfide bond" evidence="2">
    <location>
        <begin position="372"/>
        <end position="378"/>
    </location>
</feature>
<feature type="disulfide bond" evidence="2">
    <location>
        <begin position="443"/>
        <end position="455"/>
    </location>
</feature>
<feature type="non-terminal residue">
    <location>
        <position position="1"/>
    </location>
</feature>
<keyword id="KW-0106">Calcium</keyword>
<keyword id="KW-0119">Carbohydrate metabolism</keyword>
<keyword id="KW-0868">Chloride</keyword>
<keyword id="KW-1015">Disulfide bond</keyword>
<keyword id="KW-0326">Glycosidase</keyword>
<keyword id="KW-0378">Hydrolase</keyword>
<keyword id="KW-0479">Metal-binding</keyword>
<keyword id="KW-0732">Signal</keyword>
<reference key="1">
    <citation type="journal article" date="1987" name="J. Mol. Evol.">
        <title>Enzyme-coding genes as molecular clocks: the molecular evolution of animal alpha-amylases.</title>
        <authorList>
            <person name="Hickey D.A."/>
            <person name="Benkel B.F."/>
            <person name="Boer P.H."/>
            <person name="Genest Y."/>
            <person name="Abukashawa S."/>
            <person name="Ben-David G."/>
        </authorList>
    </citation>
    <scope>NUCLEOTIDE SEQUENCE [GENOMIC DNA]</scope>
</reference>
<sequence length="489" mass="53247">HFKPILVLCLATLALGLFVPHFAADRNSIVHLFEWKWSDIADECERFLAPKGFGGVQISPPNENLVVTSSNRPWWERYQPVSYILNTRSGDEAALADMISRCNAVGVRIYVDTVINHMTGMGGTGTAGSQADRDGKNYPAVPYGSGDFHDSCTVNNYQDASNVRNCELVGLADLNQGSDYVRSKIIEYMNHLVDLGVAGFRVDAAKHMWPADLEAIYASLKNLNTDHGFLDGQKPFIFQEVIDLGGEAISKHEYTGFGTVIEFQYGLSLGNAFQGGNQLANLANWGPEWNLLDGLDAVAFIDNHDNQRTGGSQILTYKNPKPYKMAIAFMLAHPYGTTRLMSSFAFDNNDQGPPQDDAGNLISPSINDDGTCGNGYVCEHRWRQIFNMVGFRNAVQGTGIENWWSDGNQQIAFGRGNKGFVAFTIGYDLNQHLQTGLPAGSYCDVISGNAENGSCSGKTITVGGDGYADISLGANEDDGVIAIHVNAKL</sequence>
<comment type="catalytic activity">
    <reaction evidence="2">
        <text>Endohydrolysis of (1-&gt;4)-alpha-D-glucosidic linkages in polysaccharides containing three or more (1-&gt;4)-alpha-linked D-glucose units.</text>
        <dbReference type="EC" id="3.2.1.1"/>
    </reaction>
</comment>
<comment type="cofactor">
    <cofactor evidence="2">
        <name>Ca(2+)</name>
        <dbReference type="ChEBI" id="CHEBI:29108"/>
    </cofactor>
    <text evidence="2">Binds 1 Ca(2+) ion per subunit.</text>
</comment>
<comment type="cofactor">
    <cofactor evidence="2">
        <name>chloride</name>
        <dbReference type="ChEBI" id="CHEBI:17996"/>
    </cofactor>
    <text evidence="2">Binds 1 Cl(-) ion per subunit.</text>
</comment>
<comment type="subunit">
    <text evidence="1">Monomer.</text>
</comment>
<comment type="similarity">
    <text evidence="4">Belongs to the glycosyl hydrolase 13 family.</text>
</comment>
<evidence type="ECO:0000250" key="1"/>
<evidence type="ECO:0000250" key="2">
    <source>
        <dbReference type="UniProtKB" id="P04746"/>
    </source>
</evidence>
<evidence type="ECO:0000255" key="3"/>
<evidence type="ECO:0000305" key="4"/>
<accession>P09107</accession>
<name>AMY_TRICA</name>
<organism>
    <name type="scientific">Tribolium castaneum</name>
    <name type="common">Red flour beetle</name>
    <dbReference type="NCBI Taxonomy" id="7070"/>
    <lineage>
        <taxon>Eukaryota</taxon>
        <taxon>Metazoa</taxon>
        <taxon>Ecdysozoa</taxon>
        <taxon>Arthropoda</taxon>
        <taxon>Hexapoda</taxon>
        <taxon>Insecta</taxon>
        <taxon>Pterygota</taxon>
        <taxon>Neoptera</taxon>
        <taxon>Endopterygota</taxon>
        <taxon>Coleoptera</taxon>
        <taxon>Polyphaga</taxon>
        <taxon>Cucujiformia</taxon>
        <taxon>Tenebrionidae</taxon>
        <taxon>Tenebrionidae incertae sedis</taxon>
        <taxon>Tribolium</taxon>
    </lineage>
</organism>